<name>RS14Z_RHOJR</name>
<protein>
    <recommendedName>
        <fullName evidence="1">Small ribosomal subunit protein uS14B</fullName>
    </recommendedName>
    <alternativeName>
        <fullName evidence="2">30S ribosomal protein S14 type Z</fullName>
    </alternativeName>
</protein>
<dbReference type="EMBL" id="CP000431">
    <property type="protein sequence ID" value="ABG97923.1"/>
    <property type="molecule type" value="Genomic_DNA"/>
</dbReference>
<dbReference type="RefSeq" id="WP_005239644.1">
    <property type="nucleotide sequence ID" value="NC_008268.1"/>
</dbReference>
<dbReference type="SMR" id="Q0S3G3"/>
<dbReference type="KEGG" id="rha:RHA1_ro06146"/>
<dbReference type="eggNOG" id="COG0199">
    <property type="taxonomic scope" value="Bacteria"/>
</dbReference>
<dbReference type="HOGENOM" id="CLU_139869_3_0_11"/>
<dbReference type="OrthoDB" id="9810484at2"/>
<dbReference type="Proteomes" id="UP000008710">
    <property type="component" value="Chromosome"/>
</dbReference>
<dbReference type="GO" id="GO:0005737">
    <property type="term" value="C:cytoplasm"/>
    <property type="evidence" value="ECO:0007669"/>
    <property type="project" value="UniProtKB-ARBA"/>
</dbReference>
<dbReference type="GO" id="GO:0015935">
    <property type="term" value="C:small ribosomal subunit"/>
    <property type="evidence" value="ECO:0007669"/>
    <property type="project" value="TreeGrafter"/>
</dbReference>
<dbReference type="GO" id="GO:0019843">
    <property type="term" value="F:rRNA binding"/>
    <property type="evidence" value="ECO:0007669"/>
    <property type="project" value="UniProtKB-UniRule"/>
</dbReference>
<dbReference type="GO" id="GO:0003735">
    <property type="term" value="F:structural constituent of ribosome"/>
    <property type="evidence" value="ECO:0007669"/>
    <property type="project" value="InterPro"/>
</dbReference>
<dbReference type="GO" id="GO:0008270">
    <property type="term" value="F:zinc ion binding"/>
    <property type="evidence" value="ECO:0007669"/>
    <property type="project" value="UniProtKB-UniRule"/>
</dbReference>
<dbReference type="GO" id="GO:0006412">
    <property type="term" value="P:translation"/>
    <property type="evidence" value="ECO:0007669"/>
    <property type="project" value="UniProtKB-UniRule"/>
</dbReference>
<dbReference type="FunFam" id="4.10.830.10:FF:000001">
    <property type="entry name" value="30S ribosomal protein S14 type Z"/>
    <property type="match status" value="1"/>
</dbReference>
<dbReference type="Gene3D" id="4.10.830.10">
    <property type="entry name" value="30s Ribosomal Protein S14, Chain N"/>
    <property type="match status" value="1"/>
</dbReference>
<dbReference type="HAMAP" id="MF_01364_B">
    <property type="entry name" value="Ribosomal_uS14_2_B"/>
    <property type="match status" value="1"/>
</dbReference>
<dbReference type="InterPro" id="IPR001209">
    <property type="entry name" value="Ribosomal_uS14"/>
</dbReference>
<dbReference type="InterPro" id="IPR023053">
    <property type="entry name" value="Ribosomal_uS14_bact"/>
</dbReference>
<dbReference type="InterPro" id="IPR018271">
    <property type="entry name" value="Ribosomal_uS14_CS"/>
</dbReference>
<dbReference type="InterPro" id="IPR043140">
    <property type="entry name" value="Ribosomal_uS14_sf"/>
</dbReference>
<dbReference type="NCBIfam" id="NF005974">
    <property type="entry name" value="PRK08061.1"/>
    <property type="match status" value="1"/>
</dbReference>
<dbReference type="PANTHER" id="PTHR19836">
    <property type="entry name" value="30S RIBOSOMAL PROTEIN S14"/>
    <property type="match status" value="1"/>
</dbReference>
<dbReference type="PANTHER" id="PTHR19836:SF19">
    <property type="entry name" value="SMALL RIBOSOMAL SUBUNIT PROTEIN US14M"/>
    <property type="match status" value="1"/>
</dbReference>
<dbReference type="Pfam" id="PF00253">
    <property type="entry name" value="Ribosomal_S14"/>
    <property type="match status" value="1"/>
</dbReference>
<dbReference type="SUPFAM" id="SSF57716">
    <property type="entry name" value="Glucocorticoid receptor-like (DNA-binding domain)"/>
    <property type="match status" value="1"/>
</dbReference>
<dbReference type="PROSITE" id="PS00527">
    <property type="entry name" value="RIBOSOMAL_S14"/>
    <property type="match status" value="1"/>
</dbReference>
<reference key="1">
    <citation type="journal article" date="2006" name="Proc. Natl. Acad. Sci. U.S.A.">
        <title>The complete genome of Rhodococcus sp. RHA1 provides insights into a catabolic powerhouse.</title>
        <authorList>
            <person name="McLeod M.P."/>
            <person name="Warren R.L."/>
            <person name="Hsiao W.W.L."/>
            <person name="Araki N."/>
            <person name="Myhre M."/>
            <person name="Fernandes C."/>
            <person name="Miyazawa D."/>
            <person name="Wong W."/>
            <person name="Lillquist A.L."/>
            <person name="Wang D."/>
            <person name="Dosanjh M."/>
            <person name="Hara H."/>
            <person name="Petrescu A."/>
            <person name="Morin R.D."/>
            <person name="Yang G."/>
            <person name="Stott J.M."/>
            <person name="Schein J.E."/>
            <person name="Shin H."/>
            <person name="Smailus D."/>
            <person name="Siddiqui A.S."/>
            <person name="Marra M.A."/>
            <person name="Jones S.J.M."/>
            <person name="Holt R."/>
            <person name="Brinkman F.S.L."/>
            <person name="Miyauchi K."/>
            <person name="Fukuda M."/>
            <person name="Davies J.E."/>
            <person name="Mohn W.W."/>
            <person name="Eltis L.D."/>
        </authorList>
    </citation>
    <scope>NUCLEOTIDE SEQUENCE [LARGE SCALE GENOMIC DNA]</scope>
    <source>
        <strain>RHA1</strain>
    </source>
</reference>
<comment type="function">
    <text evidence="1">Binds 16S rRNA, required for the assembly of 30S particles and may also be responsible for determining the conformation of the 16S rRNA at the A site.</text>
</comment>
<comment type="cofactor">
    <cofactor evidence="1">
        <name>Zn(2+)</name>
        <dbReference type="ChEBI" id="CHEBI:29105"/>
    </cofactor>
    <text evidence="1">Binds 1 zinc ion per subunit.</text>
</comment>
<comment type="subunit">
    <text evidence="1">Part of the 30S ribosomal subunit. Contacts proteins S3 and S10.</text>
</comment>
<comment type="similarity">
    <text evidence="1">Belongs to the universal ribosomal protein uS14 family. Zinc-binding uS14 subfamily.</text>
</comment>
<organism>
    <name type="scientific">Rhodococcus jostii (strain RHA1)</name>
    <dbReference type="NCBI Taxonomy" id="101510"/>
    <lineage>
        <taxon>Bacteria</taxon>
        <taxon>Bacillati</taxon>
        <taxon>Actinomycetota</taxon>
        <taxon>Actinomycetes</taxon>
        <taxon>Mycobacteriales</taxon>
        <taxon>Nocardiaceae</taxon>
        <taxon>Rhodococcus</taxon>
    </lineage>
</organism>
<keyword id="KW-0479">Metal-binding</keyword>
<keyword id="KW-0687">Ribonucleoprotein</keyword>
<keyword id="KW-0689">Ribosomal protein</keyword>
<keyword id="KW-0694">RNA-binding</keyword>
<keyword id="KW-0699">rRNA-binding</keyword>
<keyword id="KW-0862">Zinc</keyword>
<accession>Q0S3G3</accession>
<proteinExistence type="inferred from homology"/>
<sequence length="61" mass="6956">MAKKALVNKANKKPKFAVRAYTRCQRCGRPHSVFRKFGLCRICVREMAHAGELPGVHKSSW</sequence>
<gene>
    <name evidence="1" type="primary">rpsZ</name>
    <name evidence="1" type="synonym">rpsN2</name>
    <name type="ordered locus">RHA1_ro06146</name>
</gene>
<feature type="chain" id="PRO_0000269129" description="Small ribosomal subunit protein uS14B">
    <location>
        <begin position="1"/>
        <end position="61"/>
    </location>
</feature>
<feature type="binding site" evidence="1">
    <location>
        <position position="24"/>
    </location>
    <ligand>
        <name>Zn(2+)</name>
        <dbReference type="ChEBI" id="CHEBI:29105"/>
    </ligand>
</feature>
<feature type="binding site" evidence="1">
    <location>
        <position position="27"/>
    </location>
    <ligand>
        <name>Zn(2+)</name>
        <dbReference type="ChEBI" id="CHEBI:29105"/>
    </ligand>
</feature>
<feature type="binding site" evidence="1">
    <location>
        <position position="40"/>
    </location>
    <ligand>
        <name>Zn(2+)</name>
        <dbReference type="ChEBI" id="CHEBI:29105"/>
    </ligand>
</feature>
<feature type="binding site" evidence="1">
    <location>
        <position position="43"/>
    </location>
    <ligand>
        <name>Zn(2+)</name>
        <dbReference type="ChEBI" id="CHEBI:29105"/>
    </ligand>
</feature>
<evidence type="ECO:0000255" key="1">
    <source>
        <dbReference type="HAMAP-Rule" id="MF_01364"/>
    </source>
</evidence>
<evidence type="ECO:0000305" key="2"/>